<proteinExistence type="inferred from homology"/>
<reference key="1">
    <citation type="submission" date="2008-02" db="EMBL/GenBank/DDBJ databases">
        <title>Complete sequence of Escherichia coli C str. ATCC 8739.</title>
        <authorList>
            <person name="Copeland A."/>
            <person name="Lucas S."/>
            <person name="Lapidus A."/>
            <person name="Glavina del Rio T."/>
            <person name="Dalin E."/>
            <person name="Tice H."/>
            <person name="Bruce D."/>
            <person name="Goodwin L."/>
            <person name="Pitluck S."/>
            <person name="Kiss H."/>
            <person name="Brettin T."/>
            <person name="Detter J.C."/>
            <person name="Han C."/>
            <person name="Kuske C.R."/>
            <person name="Schmutz J."/>
            <person name="Larimer F."/>
            <person name="Land M."/>
            <person name="Hauser L."/>
            <person name="Kyrpides N."/>
            <person name="Mikhailova N."/>
            <person name="Ingram L."/>
            <person name="Richardson P."/>
        </authorList>
    </citation>
    <scope>NUCLEOTIDE SEQUENCE [LARGE SCALE GENOMIC DNA]</scope>
    <source>
        <strain>ATCC 8739 / DSM 1576 / NBRC 3972 / NCIMB 8545 / WDCM 00012 / Crooks</strain>
    </source>
</reference>
<evidence type="ECO:0000255" key="1">
    <source>
        <dbReference type="HAMAP-Rule" id="MF_00214"/>
    </source>
</evidence>
<feature type="chain" id="PRO_1000078046" description="3-dehydroquinate dehydratase">
    <location>
        <begin position="1"/>
        <end position="252"/>
    </location>
</feature>
<feature type="active site" description="Proton donor/acceptor" evidence="1">
    <location>
        <position position="143"/>
    </location>
</feature>
<feature type="active site" description="Schiff-base intermediate with substrate" evidence="1">
    <location>
        <position position="170"/>
    </location>
</feature>
<feature type="binding site" evidence="1">
    <location>
        <position position="21"/>
    </location>
    <ligand>
        <name>3-dehydroquinate</name>
        <dbReference type="ChEBI" id="CHEBI:32364"/>
    </ligand>
</feature>
<feature type="binding site" evidence="1">
    <location>
        <begin position="46"/>
        <end position="48"/>
    </location>
    <ligand>
        <name>3-dehydroquinate</name>
        <dbReference type="ChEBI" id="CHEBI:32364"/>
    </ligand>
</feature>
<feature type="binding site" evidence="1">
    <location>
        <position position="82"/>
    </location>
    <ligand>
        <name>3-dehydroquinate</name>
        <dbReference type="ChEBI" id="CHEBI:32364"/>
    </ligand>
</feature>
<feature type="binding site" evidence="1">
    <location>
        <position position="213"/>
    </location>
    <ligand>
        <name>3-dehydroquinate</name>
        <dbReference type="ChEBI" id="CHEBI:32364"/>
    </ligand>
</feature>
<feature type="binding site" evidence="1">
    <location>
        <position position="232"/>
    </location>
    <ligand>
        <name>3-dehydroquinate</name>
        <dbReference type="ChEBI" id="CHEBI:32364"/>
    </ligand>
</feature>
<feature type="binding site" evidence="1">
    <location>
        <position position="236"/>
    </location>
    <ligand>
        <name>3-dehydroquinate</name>
        <dbReference type="ChEBI" id="CHEBI:32364"/>
    </ligand>
</feature>
<keyword id="KW-0028">Amino-acid biosynthesis</keyword>
<keyword id="KW-0057">Aromatic amino acid biosynthesis</keyword>
<keyword id="KW-0456">Lyase</keyword>
<keyword id="KW-0704">Schiff base</keyword>
<comment type="function">
    <text evidence="1">Involved in the third step of the chorismate pathway, which leads to the biosynthesis of aromatic amino acids. Catalyzes the cis-dehydration of 3-dehydroquinate (DHQ) and introduces the first double bond of the aromatic ring to yield 3-dehydroshikimate.</text>
</comment>
<comment type="catalytic activity">
    <reaction evidence="1">
        <text>3-dehydroquinate = 3-dehydroshikimate + H2O</text>
        <dbReference type="Rhea" id="RHEA:21096"/>
        <dbReference type="ChEBI" id="CHEBI:15377"/>
        <dbReference type="ChEBI" id="CHEBI:16630"/>
        <dbReference type="ChEBI" id="CHEBI:32364"/>
        <dbReference type="EC" id="4.2.1.10"/>
    </reaction>
</comment>
<comment type="pathway">
    <text evidence="1">Metabolic intermediate biosynthesis; chorismate biosynthesis; chorismate from D-erythrose 4-phosphate and phosphoenolpyruvate: step 3/7.</text>
</comment>
<comment type="subunit">
    <text evidence="1">Homodimer.</text>
</comment>
<comment type="similarity">
    <text evidence="1">Belongs to the type-I 3-dehydroquinase family.</text>
</comment>
<protein>
    <recommendedName>
        <fullName evidence="1">3-dehydroquinate dehydratase</fullName>
        <shortName evidence="1">3-dehydroquinase</shortName>
        <ecNumber evidence="1">4.2.1.10</ecNumber>
    </recommendedName>
    <alternativeName>
        <fullName evidence="1">Type I DHQase</fullName>
    </alternativeName>
    <alternativeName>
        <fullName evidence="1">Type I dehydroquinase</fullName>
        <shortName evidence="1">DHQ1</shortName>
    </alternativeName>
</protein>
<organism>
    <name type="scientific">Escherichia coli (strain ATCC 8739 / DSM 1576 / NBRC 3972 / NCIMB 8545 / WDCM 00012 / Crooks)</name>
    <dbReference type="NCBI Taxonomy" id="481805"/>
    <lineage>
        <taxon>Bacteria</taxon>
        <taxon>Pseudomonadati</taxon>
        <taxon>Pseudomonadota</taxon>
        <taxon>Gammaproteobacteria</taxon>
        <taxon>Enterobacterales</taxon>
        <taxon>Enterobacteriaceae</taxon>
        <taxon>Escherichia</taxon>
    </lineage>
</organism>
<gene>
    <name evidence="1" type="primary">aroD</name>
    <name type="ordered locus">EcolC_1938</name>
</gene>
<sequence>MKTVTVKDLVIGAGAPKIIVSLMAKDIARVKSEALAYREADFDILEWRVDHFADLSNVESVMAAAKILRETMPEKPLLFTFRSAKEGGEQAISTEAYIALNRAAIDSGLVDMIDLELFTGDDQVKETVAYAHAHDVKVVMSNHDFHKTPEAEEIIARLRKMQSFDADIPKIALMPQSTSDVLTLLAATLEMQEQYADRPIITMSMAKTGVISRLAGEVFGSAATFGAVKKASAPGQISVTDLRTVLTILHQA</sequence>
<dbReference type="EC" id="4.2.1.10" evidence="1"/>
<dbReference type="EMBL" id="CP000946">
    <property type="protein sequence ID" value="ACA77584.1"/>
    <property type="molecule type" value="Genomic_DNA"/>
</dbReference>
<dbReference type="RefSeq" id="WP_000860163.1">
    <property type="nucleotide sequence ID" value="NZ_MTFT01000006.1"/>
</dbReference>
<dbReference type="SMR" id="B1IQ63"/>
<dbReference type="KEGG" id="ecl:EcolC_1938"/>
<dbReference type="HOGENOM" id="CLU_064444_0_0_6"/>
<dbReference type="UniPathway" id="UPA00053">
    <property type="reaction ID" value="UER00086"/>
</dbReference>
<dbReference type="GO" id="GO:0003855">
    <property type="term" value="F:3-dehydroquinate dehydratase activity"/>
    <property type="evidence" value="ECO:0007669"/>
    <property type="project" value="UniProtKB-UniRule"/>
</dbReference>
<dbReference type="GO" id="GO:0046279">
    <property type="term" value="P:3,4-dihydroxybenzoate biosynthetic process"/>
    <property type="evidence" value="ECO:0007669"/>
    <property type="project" value="TreeGrafter"/>
</dbReference>
<dbReference type="GO" id="GO:0008652">
    <property type="term" value="P:amino acid biosynthetic process"/>
    <property type="evidence" value="ECO:0007669"/>
    <property type="project" value="UniProtKB-KW"/>
</dbReference>
<dbReference type="GO" id="GO:0009073">
    <property type="term" value="P:aromatic amino acid family biosynthetic process"/>
    <property type="evidence" value="ECO:0007669"/>
    <property type="project" value="UniProtKB-KW"/>
</dbReference>
<dbReference type="GO" id="GO:0009423">
    <property type="term" value="P:chorismate biosynthetic process"/>
    <property type="evidence" value="ECO:0007669"/>
    <property type="project" value="UniProtKB-UniRule"/>
</dbReference>
<dbReference type="CDD" id="cd00502">
    <property type="entry name" value="DHQase_I"/>
    <property type="match status" value="1"/>
</dbReference>
<dbReference type="FunFam" id="3.20.20.70:FF:000047">
    <property type="entry name" value="3-dehydroquinate dehydratase"/>
    <property type="match status" value="1"/>
</dbReference>
<dbReference type="Gene3D" id="3.20.20.70">
    <property type="entry name" value="Aldolase class I"/>
    <property type="match status" value="1"/>
</dbReference>
<dbReference type="HAMAP" id="MF_00214">
    <property type="entry name" value="AroD"/>
    <property type="match status" value="1"/>
</dbReference>
<dbReference type="InterPro" id="IPR018508">
    <property type="entry name" value="3-dehydroquinate_DH_AS"/>
</dbReference>
<dbReference type="InterPro" id="IPR013785">
    <property type="entry name" value="Aldolase_TIM"/>
</dbReference>
<dbReference type="InterPro" id="IPR001381">
    <property type="entry name" value="DHquinase_I"/>
</dbReference>
<dbReference type="InterPro" id="IPR050146">
    <property type="entry name" value="Type-I_3-dehydroquinase"/>
</dbReference>
<dbReference type="NCBIfam" id="TIGR01093">
    <property type="entry name" value="aroD"/>
    <property type="match status" value="1"/>
</dbReference>
<dbReference type="PANTHER" id="PTHR43699">
    <property type="entry name" value="3-DEHYDROQUINATE DEHYDRATASE"/>
    <property type="match status" value="1"/>
</dbReference>
<dbReference type="PANTHER" id="PTHR43699:SF1">
    <property type="entry name" value="3-DEHYDROQUINATE DEHYDRATASE"/>
    <property type="match status" value="1"/>
</dbReference>
<dbReference type="Pfam" id="PF01487">
    <property type="entry name" value="DHquinase_I"/>
    <property type="match status" value="1"/>
</dbReference>
<dbReference type="SUPFAM" id="SSF51569">
    <property type="entry name" value="Aldolase"/>
    <property type="match status" value="1"/>
</dbReference>
<dbReference type="PROSITE" id="PS01028">
    <property type="entry name" value="DEHYDROQUINASE_I"/>
    <property type="match status" value="1"/>
</dbReference>
<name>AROD_ECOLC</name>
<accession>B1IQ63</accession>